<protein>
    <recommendedName>
        <fullName evidence="6">Cysteine desulfurase</fullName>
        <ecNumber evidence="3">2.8.1.7</ecNumber>
    </recommendedName>
</protein>
<gene>
    <name evidence="7" type="primary">Nfs1</name>
    <name type="synonym">Nifs</name>
</gene>
<dbReference type="EC" id="2.8.1.7" evidence="3"/>
<dbReference type="EMBL" id="AF336041">
    <property type="protein sequence ID" value="AAK12337.1"/>
    <property type="molecule type" value="mRNA"/>
</dbReference>
<dbReference type="SMR" id="Q99P39"/>
<dbReference type="FunCoup" id="Q99P39">
    <property type="interactions" value="2969"/>
</dbReference>
<dbReference type="IntAct" id="Q99P39">
    <property type="interactions" value="2"/>
</dbReference>
<dbReference type="STRING" id="10116.ENSRNOP00000026820"/>
<dbReference type="iPTMnet" id="Q99P39"/>
<dbReference type="PhosphoSitePlus" id="Q99P39"/>
<dbReference type="jPOST" id="Q99P39"/>
<dbReference type="PaxDb" id="10116-ENSRNOP00000026820"/>
<dbReference type="PeptideAtlas" id="Q99P39"/>
<dbReference type="UCSC" id="RGD:620912">
    <molecule id="Q99P39-1"/>
    <property type="organism name" value="rat"/>
</dbReference>
<dbReference type="AGR" id="RGD:620912"/>
<dbReference type="RGD" id="620912">
    <property type="gene designation" value="Nfs1"/>
</dbReference>
<dbReference type="eggNOG" id="KOG1549">
    <property type="taxonomic scope" value="Eukaryota"/>
</dbReference>
<dbReference type="InParanoid" id="Q99P39"/>
<dbReference type="BRENDA" id="2.8.1.7">
    <property type="organism ID" value="5301"/>
</dbReference>
<dbReference type="Reactome" id="R-RNO-1362409">
    <property type="pathway name" value="Mitochondrial iron-sulfur cluster biogenesis"/>
</dbReference>
<dbReference type="Reactome" id="R-RNO-947581">
    <property type="pathway name" value="Molybdenum cofactor biosynthesis"/>
</dbReference>
<dbReference type="Reactome" id="R-RNO-9865881">
    <property type="pathway name" value="Complex III assembly"/>
</dbReference>
<dbReference type="PRO" id="PR:Q99P39"/>
<dbReference type="Proteomes" id="UP000002494">
    <property type="component" value="Unplaced"/>
</dbReference>
<dbReference type="GO" id="GO:0005813">
    <property type="term" value="C:centrosome"/>
    <property type="evidence" value="ECO:0000250"/>
    <property type="project" value="UniProtKB"/>
</dbReference>
<dbReference type="GO" id="GO:0005737">
    <property type="term" value="C:cytoplasm"/>
    <property type="evidence" value="ECO:0000266"/>
    <property type="project" value="RGD"/>
</dbReference>
<dbReference type="GO" id="GO:0005829">
    <property type="term" value="C:cytosol"/>
    <property type="evidence" value="ECO:0000250"/>
    <property type="project" value="UniProtKB"/>
</dbReference>
<dbReference type="GO" id="GO:0099128">
    <property type="term" value="C:mitochondrial [2Fe-2S] assembly complex"/>
    <property type="evidence" value="ECO:0000250"/>
    <property type="project" value="UniProtKB"/>
</dbReference>
<dbReference type="GO" id="GO:0005759">
    <property type="term" value="C:mitochondrial matrix"/>
    <property type="evidence" value="ECO:0000266"/>
    <property type="project" value="RGD"/>
</dbReference>
<dbReference type="GO" id="GO:0005739">
    <property type="term" value="C:mitochondrion"/>
    <property type="evidence" value="ECO:0000250"/>
    <property type="project" value="UniProtKB"/>
</dbReference>
<dbReference type="GO" id="GO:0005634">
    <property type="term" value="C:nucleus"/>
    <property type="evidence" value="ECO:0000250"/>
    <property type="project" value="UniProtKB"/>
</dbReference>
<dbReference type="GO" id="GO:0031071">
    <property type="term" value="F:cysteine desulfurase activity"/>
    <property type="evidence" value="ECO:0000250"/>
    <property type="project" value="UniProtKB"/>
</dbReference>
<dbReference type="GO" id="GO:0051536">
    <property type="term" value="F:iron-sulfur cluster binding"/>
    <property type="evidence" value="ECO:0007669"/>
    <property type="project" value="UniProtKB-KW"/>
</dbReference>
<dbReference type="GO" id="GO:0046872">
    <property type="term" value="F:metal ion binding"/>
    <property type="evidence" value="ECO:0007669"/>
    <property type="project" value="UniProtKB-KW"/>
</dbReference>
<dbReference type="GO" id="GO:0042803">
    <property type="term" value="F:protein homodimerization activity"/>
    <property type="evidence" value="ECO:0000250"/>
    <property type="project" value="UniProtKB"/>
</dbReference>
<dbReference type="GO" id="GO:0030170">
    <property type="term" value="F:pyridoxal phosphate binding"/>
    <property type="evidence" value="ECO:0007669"/>
    <property type="project" value="InterPro"/>
</dbReference>
<dbReference type="GO" id="GO:0044571">
    <property type="term" value="P:[2Fe-2S] cluster assembly"/>
    <property type="evidence" value="ECO:0000250"/>
    <property type="project" value="UniProtKB"/>
</dbReference>
<dbReference type="GO" id="GO:0044572">
    <property type="term" value="P:[4Fe-4S] cluster assembly"/>
    <property type="evidence" value="ECO:0000250"/>
    <property type="project" value="UniProtKB"/>
</dbReference>
<dbReference type="GO" id="GO:0016226">
    <property type="term" value="P:iron-sulfur cluster assembly"/>
    <property type="evidence" value="ECO:0000318"/>
    <property type="project" value="GO_Central"/>
</dbReference>
<dbReference type="GO" id="GO:0006777">
    <property type="term" value="P:Mo-molybdopterin cofactor biosynthetic process"/>
    <property type="evidence" value="ECO:0007669"/>
    <property type="project" value="UniProtKB-KW"/>
</dbReference>
<dbReference type="FunFam" id="3.40.640.10:FF:000003">
    <property type="entry name" value="Cysteine desulfurase IscS"/>
    <property type="match status" value="1"/>
</dbReference>
<dbReference type="FunFam" id="3.90.1150.10:FF:000002">
    <property type="entry name" value="Cysteine desulfurase IscS"/>
    <property type="match status" value="1"/>
</dbReference>
<dbReference type="Gene3D" id="3.90.1150.10">
    <property type="entry name" value="Aspartate Aminotransferase, domain 1"/>
    <property type="match status" value="1"/>
</dbReference>
<dbReference type="Gene3D" id="3.40.640.10">
    <property type="entry name" value="Type I PLP-dependent aspartate aminotransferase-like (Major domain)"/>
    <property type="match status" value="1"/>
</dbReference>
<dbReference type="HAMAP" id="MF_00331">
    <property type="entry name" value="Cys_desulf_IscS"/>
    <property type="match status" value="1"/>
</dbReference>
<dbReference type="InterPro" id="IPR000192">
    <property type="entry name" value="Aminotrans_V_dom"/>
</dbReference>
<dbReference type="InterPro" id="IPR020578">
    <property type="entry name" value="Aminotrans_V_PyrdxlP_BS"/>
</dbReference>
<dbReference type="InterPro" id="IPR010240">
    <property type="entry name" value="Cys_deSase_IscS"/>
</dbReference>
<dbReference type="InterPro" id="IPR016454">
    <property type="entry name" value="Cysteine_dSase"/>
</dbReference>
<dbReference type="InterPro" id="IPR015424">
    <property type="entry name" value="PyrdxlP-dep_Trfase"/>
</dbReference>
<dbReference type="InterPro" id="IPR015421">
    <property type="entry name" value="PyrdxlP-dep_Trfase_major"/>
</dbReference>
<dbReference type="InterPro" id="IPR015422">
    <property type="entry name" value="PyrdxlP-dep_Trfase_small"/>
</dbReference>
<dbReference type="NCBIfam" id="TIGR02006">
    <property type="entry name" value="IscS"/>
    <property type="match status" value="1"/>
</dbReference>
<dbReference type="NCBIfam" id="NF002806">
    <property type="entry name" value="PRK02948.1"/>
    <property type="match status" value="1"/>
</dbReference>
<dbReference type="NCBIfam" id="NF010611">
    <property type="entry name" value="PRK14012.1"/>
    <property type="match status" value="1"/>
</dbReference>
<dbReference type="PANTHER" id="PTHR11601:SF34">
    <property type="entry name" value="CYSTEINE DESULFURASE"/>
    <property type="match status" value="1"/>
</dbReference>
<dbReference type="PANTHER" id="PTHR11601">
    <property type="entry name" value="CYSTEINE DESULFURYLASE FAMILY MEMBER"/>
    <property type="match status" value="1"/>
</dbReference>
<dbReference type="Pfam" id="PF00266">
    <property type="entry name" value="Aminotran_5"/>
    <property type="match status" value="1"/>
</dbReference>
<dbReference type="PIRSF" id="PIRSF005572">
    <property type="entry name" value="NifS"/>
    <property type="match status" value="1"/>
</dbReference>
<dbReference type="SUPFAM" id="SSF53383">
    <property type="entry name" value="PLP-dependent transferases"/>
    <property type="match status" value="1"/>
</dbReference>
<dbReference type="PROSITE" id="PS00595">
    <property type="entry name" value="AA_TRANSFER_CLASS_5"/>
    <property type="match status" value="1"/>
</dbReference>
<proteinExistence type="evidence at transcript level"/>
<keyword id="KW-0024">Alternative initiation</keyword>
<keyword id="KW-0963">Cytoplasm</keyword>
<keyword id="KW-0206">Cytoskeleton</keyword>
<keyword id="KW-0408">Iron</keyword>
<keyword id="KW-0411">Iron-sulfur</keyword>
<keyword id="KW-0479">Metal-binding</keyword>
<keyword id="KW-0496">Mitochondrion</keyword>
<keyword id="KW-0501">Molybdenum cofactor biosynthesis</keyword>
<keyword id="KW-0539">Nucleus</keyword>
<keyword id="KW-0663">Pyridoxal phosphate</keyword>
<keyword id="KW-1185">Reference proteome</keyword>
<keyword id="KW-0808">Transferase</keyword>
<keyword id="KW-0809">Transit peptide</keyword>
<keyword id="KW-0862">Zinc</keyword>
<reference key="1">
    <citation type="submission" date="2001-01" db="EMBL/GenBank/DDBJ databases">
        <title>cDNA cloning of cysteine desulfurase (NifS) protein in rat liver.</title>
        <authorList>
            <person name="Hsu S.-C."/>
            <person name="Liew Y.-F."/>
            <person name="Shaw N.-S."/>
        </authorList>
    </citation>
    <scope>NUCLEOTIDE SEQUENCE [MRNA]</scope>
    <source>
        <tissue>Liver</tissue>
    </source>
</reference>
<sequence length="451" mass="50013">MLLRVAWRRASLAATSVALRRSSVPTRGLRLRVVDHAPHSAVPSEAEAVLRPLYMDVRATTPLDPRVLDAMLPYLVNYYGNPHSRTHAYGWESEAAMERARQQVASLIGADPREIIFTSGATESNNIAIKGVARFYRSRKKHLVTTQTEHKCVLDSCRSLEAEGFRVTYLPVQKSGIIDLKELEAAIQPDTSLVSVMTVNNEIGVKQPIAEIGQICSSRKLYFHTDAAQAVGKIPLDVNDMKIDLMSISGHKLYGPKGVGAIYIRRRPRVRVEALQSGGGQERGMRSGTVPTPLVVGLGAACELAQQEMEYDHKRISKLAERLIQKIMKNLPDVVMNGDPKQHYPGCINLSFAYVEGESLLMALKDVALSSGSACTSASLEPSYVLRAIGTDEDLAHSSIRFGIGRFTTEEEVDYTVQKCIHHVKRLREMSPLWEMVQDGIDLKSIKWTQH</sequence>
<evidence type="ECO:0000250" key="1">
    <source>
        <dbReference type="UniProtKB" id="O29689"/>
    </source>
</evidence>
<evidence type="ECO:0000250" key="2">
    <source>
        <dbReference type="UniProtKB" id="Q9H1K1"/>
    </source>
</evidence>
<evidence type="ECO:0000250" key="3">
    <source>
        <dbReference type="UniProtKB" id="Q9Y697"/>
    </source>
</evidence>
<evidence type="ECO:0000250" key="4">
    <source>
        <dbReference type="UniProtKB" id="Q9Z1J3"/>
    </source>
</evidence>
<evidence type="ECO:0000255" key="5"/>
<evidence type="ECO:0000305" key="6"/>
<evidence type="ECO:0000312" key="7">
    <source>
        <dbReference type="RGD" id="620912"/>
    </source>
</evidence>
<comment type="function">
    <molecule>Isoform Mitochondrial</molecule>
    <text evidence="2 3 4">Cysteine desulfurase, of the core iron-sulfur cluster (ISC) assembly complex, that catalyzes the desulfuration of L-cysteine to L-alanine, as component of the cysteine desulfurase complex leading to the formation of a cysteine persulfide intermediate at the active site cysteine residue and participates in the [2Fe-2S] clusters assembly on the scaffolding protein ISCU. The persulfide is then transferred on the flexible Cys loop from the catalytic site of NFS1 to the surface of NFS1 (By similarity). After the NFS1-linked persulfide sulfur is transferred to one of the conserved Cys residues of the scaffold, a reaction assisted by FXN (By similarity). The core iron-sulfur cluster (ISC) assembly complex is involved in the de novo synthesis of a [2Fe-2S] cluster, the first step of the mitochondrial iron-sulfur protein biogenesis. This process is initiated by the cysteine desulfurase complex (NFS1:LYRM4:NDUFAB1) that produces persulfide which is delivered on the scaffold protein ISCU in a FXN-dependent manner. Then this complex is stabilized by FDX2 which provides reducing equivalents to accomplish the [2Fe-2S] cluster assembly. Finally, the [2Fe-2S] cluster is transferred from ISCU to chaperone proteins, including HSCB, HSPA9 and GLRX5 (By similarity).</text>
</comment>
<comment type="function">
    <molecule>Isoform Cytoplasmic</molecule>
    <text evidence="3">May catalyze the desulfuration of L-cysteine to L-alanine as component of the cysteine desulfurase complex (NFS1:LYRM4), leading to the formation of a cysteine persulfide intermediate. Acts as a sulfur donor for MOCS3 by transferring the sulfur of the cysteine persulfide intermediate on MOCS3.</text>
</comment>
<comment type="catalytic activity">
    <molecule>Isoform Mitochondrial</molecule>
    <reaction evidence="3">
        <text>(sulfur carrier)-H + L-cysteine = (sulfur carrier)-SH + L-alanine</text>
        <dbReference type="Rhea" id="RHEA:43892"/>
        <dbReference type="Rhea" id="RHEA-COMP:14737"/>
        <dbReference type="Rhea" id="RHEA-COMP:14739"/>
        <dbReference type="ChEBI" id="CHEBI:29917"/>
        <dbReference type="ChEBI" id="CHEBI:35235"/>
        <dbReference type="ChEBI" id="CHEBI:57972"/>
        <dbReference type="ChEBI" id="CHEBI:64428"/>
        <dbReference type="EC" id="2.8.1.7"/>
    </reaction>
</comment>
<comment type="catalytic activity">
    <molecule>Isoform Cytoplasmic</molecule>
    <reaction evidence="3">
        <text>(sulfur carrier)-H + L-cysteine = (sulfur carrier)-SH + L-alanine</text>
        <dbReference type="Rhea" id="RHEA:43892"/>
        <dbReference type="Rhea" id="RHEA-COMP:14737"/>
        <dbReference type="Rhea" id="RHEA-COMP:14739"/>
        <dbReference type="ChEBI" id="CHEBI:29917"/>
        <dbReference type="ChEBI" id="CHEBI:35235"/>
        <dbReference type="ChEBI" id="CHEBI:57972"/>
        <dbReference type="ChEBI" id="CHEBI:64428"/>
        <dbReference type="EC" id="2.8.1.7"/>
    </reaction>
</comment>
<comment type="catalytic activity">
    <molecule>Isoform Cytoplasmic</molecule>
    <reaction evidence="3">
        <text>L-cysteinyl-[cysteine desulfurase] + L-cysteine = S-sulfanyl-L-cysteinyl-[cysteine desulfurase] + L-alanine</text>
        <dbReference type="Rhea" id="RHEA:17457"/>
        <dbReference type="Rhea" id="RHEA-COMP:12157"/>
        <dbReference type="Rhea" id="RHEA-COMP:12158"/>
        <dbReference type="ChEBI" id="CHEBI:29950"/>
        <dbReference type="ChEBI" id="CHEBI:35235"/>
        <dbReference type="ChEBI" id="CHEBI:57972"/>
        <dbReference type="ChEBI" id="CHEBI:61963"/>
    </reaction>
</comment>
<comment type="cofactor">
    <cofactor evidence="3">
        <name>pyridoxal 5'-phosphate</name>
        <dbReference type="ChEBI" id="CHEBI:597326"/>
    </cofactor>
</comment>
<comment type="activity regulation">
    <text evidence="3">Active only in complex with LYRM4.</text>
</comment>
<comment type="subunit">
    <molecule>Isoform Mitochondrial</molecule>
    <text evidence="3 4">Homodimer. Component of the mitochondrial core iron-sulfur cluster (ISC) complex composed of NFS1, LYRM4, NDUFAB1, ISCU, FXN, and FDX2; this complex is a heterohexamer containing two copies of each monomer. Component of cyteine desulfurase complex composed of NFS1, LYRM4 and NDUFAB1; this complex contributes to the activation of cysteine desulfurase activity and NFS1 stabilization. Interacts (homodimer form) with ISCU (D-state); each monomer interacts with the C-terminal regions of each NFS1 monomer. Interacts with HSPA9. Interacts (via homodimer form) with FDX2. Interacts (via homodimer form) with FXN. Interacts with LYRM4 (By similarity). Component of a complex composed of FXN, NFS1, LYRM4 and ISCU (By similarity).</text>
</comment>
<comment type="subunit">
    <molecule>Isoform Cytoplasmic</molecule>
    <text evidence="3">Monomer. Homodimer. Oligomer. Interacts with ISCU. Component of the cysteine desulfurase complex composed of NFS1 and LYRM4; this complex contributes to the activation of cysteine desulfurase activity. Interacts with MOCS3.</text>
</comment>
<comment type="subcellular location">
    <molecule>Isoform Mitochondrial</molecule>
    <subcellularLocation>
        <location evidence="3">Mitochondrion</location>
    </subcellularLocation>
</comment>
<comment type="subcellular location">
    <molecule>Isoform Cytoplasmic</molecule>
    <subcellularLocation>
        <location evidence="3">Cytoplasm</location>
    </subcellularLocation>
    <subcellularLocation>
        <location evidence="3">Nucleus</location>
    </subcellularLocation>
    <subcellularLocation>
        <location evidence="3">Cytoplasm</location>
        <location evidence="3">Cytoskeleton</location>
        <location evidence="3">Microtubule organizing center</location>
        <location evidence="3">Centrosome</location>
    </subcellularLocation>
</comment>
<comment type="alternative products">
    <event type="alternative initiation"/>
    <isoform>
        <id>Q99P39-1</id>
        <name>Mitochondrial</name>
        <sequence type="displayed"/>
    </isoform>
    <isoform>
        <id>Q99P39-2</id>
        <name>Cytoplasmic</name>
        <sequence type="described" ref="VSP_018648"/>
    </isoform>
</comment>
<comment type="PTM">
    <text evidence="4">N-gluconoylated.</text>
</comment>
<comment type="PTM">
    <text evidence="4">Cysteine persulfide intermediate is reduced by thiol-containing molecules like glutathione and L-cysteine. Persulfide reduction is a rate-limiting step of cysteine desulfurase catalytic cycle.</text>
</comment>
<comment type="similarity">
    <text evidence="6">Belongs to the class-V pyridoxal-phosphate-dependent aminotransferase family. NifS/IscS subfamily.</text>
</comment>
<name>NFS1_RAT</name>
<organism>
    <name type="scientific">Rattus norvegicus</name>
    <name type="common">Rat</name>
    <dbReference type="NCBI Taxonomy" id="10116"/>
    <lineage>
        <taxon>Eukaryota</taxon>
        <taxon>Metazoa</taxon>
        <taxon>Chordata</taxon>
        <taxon>Craniata</taxon>
        <taxon>Vertebrata</taxon>
        <taxon>Euteleostomi</taxon>
        <taxon>Mammalia</taxon>
        <taxon>Eutheria</taxon>
        <taxon>Euarchontoglires</taxon>
        <taxon>Glires</taxon>
        <taxon>Rodentia</taxon>
        <taxon>Myomorpha</taxon>
        <taxon>Muroidea</taxon>
        <taxon>Muridae</taxon>
        <taxon>Murinae</taxon>
        <taxon>Rattus</taxon>
    </lineage>
</organism>
<accession>Q99P39</accession>
<feature type="transit peptide" description="Mitochondrion" evidence="5">
    <location>
        <begin position="1"/>
        <end status="unknown"/>
    </location>
</feature>
<feature type="chain" id="PRO_0000001296" description="Cysteine desulfurase">
    <location>
        <begin status="unknown"/>
        <end position="451"/>
    </location>
</feature>
<feature type="active site" description="Cysteine persulfide intermediate" evidence="4">
    <location>
        <position position="375"/>
    </location>
</feature>
<feature type="binding site" evidence="3">
    <location>
        <position position="121"/>
    </location>
    <ligand>
        <name>pyridoxal 5'-phosphate</name>
        <dbReference type="ChEBI" id="CHEBI:597326"/>
    </ligand>
</feature>
<feature type="binding site" evidence="3">
    <location>
        <position position="122"/>
    </location>
    <ligand>
        <name>pyridoxal 5'-phosphate</name>
        <dbReference type="ChEBI" id="CHEBI:597326"/>
    </ligand>
</feature>
<feature type="binding site" evidence="3">
    <location>
        <position position="229"/>
    </location>
    <ligand>
        <name>pyridoxal 5'-phosphate</name>
        <dbReference type="ChEBI" id="CHEBI:597326"/>
    </ligand>
</feature>
<feature type="binding site" evidence="3">
    <location>
        <position position="249"/>
    </location>
    <ligand>
        <name>pyridoxal 5'-phosphate</name>
        <dbReference type="ChEBI" id="CHEBI:597326"/>
    </ligand>
</feature>
<feature type="binding site" evidence="3">
    <location>
        <position position="251"/>
    </location>
    <ligand>
        <name>pyridoxal 5'-phosphate</name>
        <dbReference type="ChEBI" id="CHEBI:597326"/>
    </ligand>
</feature>
<feature type="binding site" evidence="3">
    <location>
        <position position="289"/>
    </location>
    <ligand>
        <name>pyridoxal 5'-phosphate</name>
        <dbReference type="ChEBI" id="CHEBI:597326"/>
    </ligand>
</feature>
<feature type="binding site" description="via persulfide group" evidence="1">
    <location>
        <position position="375"/>
    </location>
    <ligand>
        <name>[2Fe-2S] cluster</name>
        <dbReference type="ChEBI" id="CHEBI:190135"/>
        <note>ligand shared with ISCU</note>
    </ligand>
</feature>
<feature type="binding site" evidence="3">
    <location>
        <position position="375"/>
    </location>
    <ligand>
        <name>Zn(2+)</name>
        <dbReference type="ChEBI" id="CHEBI:29105"/>
        <note>ligand shared with ISCU (isoform 2)</note>
    </ligand>
</feature>
<feature type="modified residue" description="N6-(pyridoxal phosphate)lysine" evidence="3">
    <location>
        <position position="252"/>
    </location>
</feature>
<feature type="modified residue" description="Cysteine persulfide" evidence="4">
    <location>
        <position position="375"/>
    </location>
</feature>
<feature type="splice variant" id="VSP_018648" description="In isoform Cytoplasmic." evidence="6">
    <location>
        <begin position="1"/>
        <end position="54"/>
    </location>
</feature>